<gene>
    <name type="primary">petJ</name>
</gene>
<keyword id="KW-0903">Direct protein sequencing</keyword>
<keyword id="KW-0249">Electron transport</keyword>
<keyword id="KW-0349">Heme</keyword>
<keyword id="KW-0408">Iron</keyword>
<keyword id="KW-0479">Metal-binding</keyword>
<keyword id="KW-0602">Photosynthesis</keyword>
<keyword id="KW-0793">Thylakoid</keyword>
<keyword id="KW-0813">Transport</keyword>
<evidence type="ECO:0000250" key="1"/>
<evidence type="ECO:0000305" key="2"/>
<organism>
    <name type="scientific">Leptolyngbya boryana</name>
    <name type="common">Plectonema boryanum</name>
    <dbReference type="NCBI Taxonomy" id="1184"/>
    <lineage>
        <taxon>Bacteria</taxon>
        <taxon>Bacillati</taxon>
        <taxon>Cyanobacteriota</taxon>
        <taxon>Cyanophyceae</taxon>
        <taxon>Leptolyngbyales</taxon>
        <taxon>Leptolyngbyaceae</taxon>
        <taxon>Leptolyngbya group</taxon>
        <taxon>Leptolyngbya</taxon>
    </lineage>
</organism>
<proteinExistence type="evidence at protein level"/>
<protein>
    <recommendedName>
        <fullName>Cytochrome c6</fullName>
    </recommendedName>
    <alternativeName>
        <fullName>Cytochrome c-553</fullName>
    </alternativeName>
    <alternativeName>
        <fullName>Cytochrome c553</fullName>
    </alternativeName>
    <alternativeName>
        <fullName>Soluble cytochrome f</fullName>
    </alternativeName>
</protein>
<name>CYC6_LEPBY</name>
<dbReference type="PIR" id="A00109">
    <property type="entry name" value="CCPB6"/>
</dbReference>
<dbReference type="SMR" id="P00117"/>
<dbReference type="GO" id="GO:0031979">
    <property type="term" value="C:plasma membrane-derived thylakoid lumen"/>
    <property type="evidence" value="ECO:0007669"/>
    <property type="project" value="UniProtKB-SubCell"/>
</dbReference>
<dbReference type="GO" id="GO:0009055">
    <property type="term" value="F:electron transfer activity"/>
    <property type="evidence" value="ECO:0007669"/>
    <property type="project" value="UniProtKB-UniRule"/>
</dbReference>
<dbReference type="GO" id="GO:0020037">
    <property type="term" value="F:heme binding"/>
    <property type="evidence" value="ECO:0007669"/>
    <property type="project" value="InterPro"/>
</dbReference>
<dbReference type="GO" id="GO:0005506">
    <property type="term" value="F:iron ion binding"/>
    <property type="evidence" value="ECO:0007669"/>
    <property type="project" value="InterPro"/>
</dbReference>
<dbReference type="GO" id="GO:0015979">
    <property type="term" value="P:photosynthesis"/>
    <property type="evidence" value="ECO:0007669"/>
    <property type="project" value="UniProtKB-UniRule"/>
</dbReference>
<dbReference type="FunFam" id="1.10.760.10:FF:000038">
    <property type="entry name" value="Cytochrome c6"/>
    <property type="match status" value="1"/>
</dbReference>
<dbReference type="Gene3D" id="1.10.760.10">
    <property type="entry name" value="Cytochrome c-like domain"/>
    <property type="match status" value="1"/>
</dbReference>
<dbReference type="HAMAP" id="MF_00594">
    <property type="entry name" value="Cytc_PetJ"/>
    <property type="match status" value="1"/>
</dbReference>
<dbReference type="InterPro" id="IPR009056">
    <property type="entry name" value="Cyt_c-like_dom"/>
</dbReference>
<dbReference type="InterPro" id="IPR036909">
    <property type="entry name" value="Cyt_c-like_dom_sf"/>
</dbReference>
<dbReference type="InterPro" id="IPR023655">
    <property type="entry name" value="Cyt_C6"/>
</dbReference>
<dbReference type="InterPro" id="IPR008168">
    <property type="entry name" value="Cyt_C_IC"/>
</dbReference>
<dbReference type="PANTHER" id="PTHR34688">
    <property type="entry name" value="CYTOCHROME C6, CHLOROPLASTIC"/>
    <property type="match status" value="1"/>
</dbReference>
<dbReference type="PANTHER" id="PTHR34688:SF2">
    <property type="entry name" value="CYTOCHROME C6, CHLOROPLASTIC"/>
    <property type="match status" value="1"/>
</dbReference>
<dbReference type="Pfam" id="PF13442">
    <property type="entry name" value="Cytochrome_CBB3"/>
    <property type="match status" value="1"/>
</dbReference>
<dbReference type="PRINTS" id="PR00605">
    <property type="entry name" value="CYTCHROMECIC"/>
</dbReference>
<dbReference type="SUPFAM" id="SSF46626">
    <property type="entry name" value="Cytochrome c"/>
    <property type="match status" value="1"/>
</dbReference>
<dbReference type="PROSITE" id="PS51007">
    <property type="entry name" value="CYTC"/>
    <property type="match status" value="1"/>
</dbReference>
<sequence length="85" mass="8576">ADAAAGGKVFNANCAACHASGGGQINGAKTLKKNALTANGKDTVEAIVAQVTNGKGAMPAFKGRLSDDQIQSVALYVLDKAEKGW</sequence>
<feature type="chain" id="PRO_0000208684" description="Cytochrome c6">
    <location>
        <begin position="1"/>
        <end position="85"/>
    </location>
</feature>
<feature type="binding site" description="covalent">
    <location>
        <position position="14"/>
    </location>
    <ligand>
        <name>heme c</name>
        <dbReference type="ChEBI" id="CHEBI:61717"/>
    </ligand>
</feature>
<feature type="binding site" description="covalent">
    <location>
        <position position="17"/>
    </location>
    <ligand>
        <name>heme c</name>
        <dbReference type="ChEBI" id="CHEBI:61717"/>
    </ligand>
</feature>
<feature type="binding site" description="axial binding residue">
    <location>
        <position position="18"/>
    </location>
    <ligand>
        <name>heme c</name>
        <dbReference type="ChEBI" id="CHEBI:61717"/>
    </ligand>
    <ligandPart>
        <name>Fe</name>
        <dbReference type="ChEBI" id="CHEBI:18248"/>
    </ligandPart>
</feature>
<feature type="binding site" description="axial binding residue">
    <location>
        <position position="58"/>
    </location>
    <ligand>
        <name>heme c</name>
        <dbReference type="ChEBI" id="CHEBI:61717"/>
    </ligand>
    <ligandPart>
        <name>Fe</name>
        <dbReference type="ChEBI" id="CHEBI:18248"/>
    </ligandPart>
</feature>
<reference key="1">
    <citation type="journal article" date="1977" name="Eur. J. Biochem.">
        <title>Purification and primary structure of cytochrome f from the cyanobacterium, Plectonema boryanum.</title>
        <authorList>
            <person name="Aitken A."/>
        </authorList>
    </citation>
    <scope>PROTEIN SEQUENCE</scope>
    <source>
        <strain>PCC7602 / UTEX 426 / CCAP 1462/2</strain>
    </source>
</reference>
<accession>P00117</accession>
<comment type="function">
    <text>Functions as an electron carrier between membrane-bound cytochrome b6-f and photosystem I in oxygenic photosynthesis.</text>
</comment>
<comment type="subunit">
    <text evidence="1">Monomer.</text>
</comment>
<comment type="subcellular location">
    <subcellularLocation>
        <location evidence="2">Cellular thylakoid lumen</location>
    </subcellularLocation>
</comment>
<comment type="PTM">
    <text>Binds 1 heme c group covalently per subunit.</text>
</comment>
<comment type="similarity">
    <text evidence="2">Belongs to the cytochrome c family. PetJ subfamily.</text>
</comment>